<keyword id="KW-0284">Flavonoid biosynthesis</keyword>
<keyword id="KW-0413">Isomerase</keyword>
<protein>
    <recommendedName>
        <fullName>Chalcone--flavanone isomerase 2</fullName>
        <shortName>Chalcone isomerase 2</shortName>
        <ecNumber>5.5.1.6</ecNumber>
    </recommendedName>
    <alternativeName>
        <fullName>DgCHI2</fullName>
    </alternativeName>
</protein>
<dbReference type="EC" id="5.5.1.6"/>
<dbReference type="EMBL" id="EF094934">
    <property type="protein sequence ID" value="ABK88309.1"/>
    <property type="molecule type" value="mRNA"/>
</dbReference>
<dbReference type="SMR" id="A1E261"/>
<dbReference type="UniPathway" id="UPA00154"/>
<dbReference type="GO" id="GO:0045430">
    <property type="term" value="F:chalcone isomerase activity"/>
    <property type="evidence" value="ECO:0007669"/>
    <property type="project" value="UniProtKB-EC"/>
</dbReference>
<dbReference type="GO" id="GO:0009813">
    <property type="term" value="P:flavonoid biosynthetic process"/>
    <property type="evidence" value="ECO:0007669"/>
    <property type="project" value="UniProtKB-UniPathway"/>
</dbReference>
<dbReference type="Gene3D" id="1.10.890.20">
    <property type="match status" value="1"/>
</dbReference>
<dbReference type="Gene3D" id="3.50.70.10">
    <property type="match status" value="1"/>
</dbReference>
<dbReference type="InterPro" id="IPR044164">
    <property type="entry name" value="CFI"/>
</dbReference>
<dbReference type="InterPro" id="IPR016087">
    <property type="entry name" value="Chalcone_isomerase"/>
</dbReference>
<dbReference type="InterPro" id="IPR016088">
    <property type="entry name" value="Chalcone_isomerase_3-sand"/>
</dbReference>
<dbReference type="InterPro" id="IPR016089">
    <property type="entry name" value="Chalcone_isomerase_bundle_sf"/>
</dbReference>
<dbReference type="InterPro" id="IPR036298">
    <property type="entry name" value="Chalcone_isomerase_sf"/>
</dbReference>
<dbReference type="PANTHER" id="PTHR28039:SF8">
    <property type="entry name" value="CHALCONE--FLAVANONE ISOMERASE 1-RELATED"/>
    <property type="match status" value="1"/>
</dbReference>
<dbReference type="PANTHER" id="PTHR28039">
    <property type="entry name" value="CHALCONE--FLAVONONE ISOMERASE 1-RELATED"/>
    <property type="match status" value="1"/>
</dbReference>
<dbReference type="Pfam" id="PF02431">
    <property type="entry name" value="Chalcone"/>
    <property type="match status" value="1"/>
</dbReference>
<dbReference type="SUPFAM" id="SSF54626">
    <property type="entry name" value="Chalcone isomerase"/>
    <property type="match status" value="1"/>
</dbReference>
<sequence>MATPSSATSLNVENIVFPSSVKPPGDTNTLFLGGAGVRGMEIQGNFVKFTGIGVYLEDKAIPLLAGKWKGKTAEELVNSVEFFRDIVTGPFKKFTQVTMILPLTGKQYSEKVSEMCVGVWKAHGTYTDADGATIDKFLEVFKDENFPPGASILFTTSPDGSLTISFSKDGMIPEAANIVLENEKLAQAVIESVIGKNGVSPATKQSLASRLSDLMNHFDEKATTDAEPNLSKNGL</sequence>
<gene>
    <name type="primary">CHI2</name>
</gene>
<proteinExistence type="evidence at transcript level"/>
<name>CFI2_CHRMO</name>
<accession>A1E261</accession>
<feature type="chain" id="PRO_0000314572" description="Chalcone--flavanone isomerase 2">
    <location>
        <begin position="1"/>
        <end position="235"/>
    </location>
</feature>
<feature type="binding site" evidence="1">
    <location>
        <position position="50"/>
    </location>
    <ligand>
        <name>substrate</name>
    </ligand>
</feature>
<feature type="binding site" evidence="1">
    <location>
        <position position="192"/>
    </location>
    <ligand>
        <name>substrate</name>
    </ligand>
</feature>
<feature type="site" description="Important for catalytic activity" evidence="1">
    <location>
        <position position="108"/>
    </location>
</feature>
<reference key="1">
    <citation type="submission" date="2007-01" db="EMBL/GenBank/DDBJ databases">
        <title>Color response of two red chrysanthemum cultivars to high temperature.</title>
        <authorList>
            <person name="Huh E.J."/>
            <person name="Kim T.H."/>
            <person name="Cho K.H."/>
            <person name="Lee Y.R."/>
            <person name="Goo D.H."/>
            <person name="Lee K.S."/>
            <person name="Choi S.R."/>
        </authorList>
    </citation>
    <scope>NUCLEOTIDE SEQUENCE [MRNA]</scope>
    <source>
        <strain>cv. Wembley</strain>
        <tissue>Petal</tissue>
    </source>
</reference>
<comment type="function">
    <text evidence="1">Catalyzes the intramolecular cyclization of bicyclic chalcones into tricyclic (S)-flavanones. Responsible for the isomerization of 4,2',4',6'-tetrahydroxychalcone (also termed chalcone) into naringenin (By similarity).</text>
</comment>
<comment type="catalytic activity">
    <reaction>
        <text>a chalcone = a flavanone.</text>
        <dbReference type="EC" id="5.5.1.6"/>
    </reaction>
</comment>
<comment type="pathway">
    <text>Secondary metabolite biosynthesis; flavonoid biosynthesis.</text>
</comment>
<comment type="miscellaneous">
    <text>Part of the biosynthetic pathway for all classes of flavonoids, a large class of secondary plant metabolites, many of which are brightly colored.</text>
</comment>
<comment type="similarity">
    <text evidence="2">Belongs to the chalcone isomerase family.</text>
</comment>
<evidence type="ECO:0000250" key="1"/>
<evidence type="ECO:0000305" key="2"/>
<organism>
    <name type="scientific">Chrysanthemum morifolium</name>
    <name type="common">Florist's daisy</name>
    <name type="synonym">Dendranthema grandiflorum</name>
    <dbReference type="NCBI Taxonomy" id="41568"/>
    <lineage>
        <taxon>Eukaryota</taxon>
        <taxon>Viridiplantae</taxon>
        <taxon>Streptophyta</taxon>
        <taxon>Embryophyta</taxon>
        <taxon>Tracheophyta</taxon>
        <taxon>Spermatophyta</taxon>
        <taxon>Magnoliopsida</taxon>
        <taxon>eudicotyledons</taxon>
        <taxon>Gunneridae</taxon>
        <taxon>Pentapetalae</taxon>
        <taxon>asterids</taxon>
        <taxon>campanulids</taxon>
        <taxon>Asterales</taxon>
        <taxon>Asteraceae</taxon>
        <taxon>Asteroideae</taxon>
        <taxon>Anthemideae</taxon>
        <taxon>Artemisiinae</taxon>
        <taxon>Chrysanthemum</taxon>
    </lineage>
</organism>